<sequence length="148" mass="16581">MGRLISVSFGLLVVFLSLSGTGAALNCASGWSGYDQHCYKVFDKPKSWADAEKFCKKQTSGGHLVSFHSSEETDFVVKLVSQTLESQILWMGLSKVWNQCDWGWSNGAKLKYKAWAEESYCVYFSSTKKGWRSRACRLLGHFVCKSPA</sequence>
<organism>
    <name type="scientific">Macrovipera lebetinus</name>
    <name type="common">Levantine viper</name>
    <name type="synonym">Vipera lebetina</name>
    <dbReference type="NCBI Taxonomy" id="3148341"/>
    <lineage>
        <taxon>Eukaryota</taxon>
        <taxon>Metazoa</taxon>
        <taxon>Chordata</taxon>
        <taxon>Craniata</taxon>
        <taxon>Vertebrata</taxon>
        <taxon>Euteleostomi</taxon>
        <taxon>Lepidosauria</taxon>
        <taxon>Squamata</taxon>
        <taxon>Bifurcata</taxon>
        <taxon>Unidentata</taxon>
        <taxon>Episquamata</taxon>
        <taxon>Toxicofera</taxon>
        <taxon>Serpentes</taxon>
        <taxon>Colubroidea</taxon>
        <taxon>Viperidae</taxon>
        <taxon>Viperinae</taxon>
        <taxon>Macrovipera</taxon>
    </lineage>
</organism>
<accession>B4XT01</accession>
<protein>
    <recommendedName>
        <fullName>Snaclec B2</fullName>
    </recommendedName>
    <alternativeName>
        <fullName>C-type lectin B2</fullName>
    </alternativeName>
</protein>
<feature type="signal peptide" evidence="2">
    <location>
        <begin position="1"/>
        <end position="24"/>
    </location>
</feature>
<feature type="chain" id="PRO_0000356334" description="Snaclec B2">
    <location>
        <begin position="25"/>
        <end position="148"/>
    </location>
</feature>
<feature type="domain" description="C-type lectin" evidence="3">
    <location>
        <begin position="34"/>
        <end position="145"/>
    </location>
</feature>
<feature type="disulfide bond" evidence="3">
    <location>
        <begin position="27"/>
        <end position="38"/>
    </location>
</feature>
<feature type="disulfide bond" evidence="3">
    <location>
        <begin position="55"/>
        <end position="144"/>
    </location>
</feature>
<feature type="disulfide bond" description="Interchain" evidence="3">
    <location>
        <position position="100"/>
    </location>
</feature>
<feature type="disulfide bond" evidence="3">
    <location>
        <begin position="121"/>
        <end position="136"/>
    </location>
</feature>
<proteinExistence type="evidence at transcript level"/>
<name>SLB2_MACLB</name>
<reference key="1">
    <citation type="journal article" date="2009" name="Toxicon">
        <title>C-type lectin protein isoforms of Macrovipera lebetina: cDNA cloning and genetic diversity.</title>
        <authorList>
            <person name="Jebali J."/>
            <person name="Bazaa A."/>
            <person name="Sarray S."/>
            <person name="Benhaj K."/>
            <person name="Karboul A."/>
            <person name="El Ayeb M."/>
            <person name="Marrakchi N."/>
            <person name="Gargouri A."/>
        </authorList>
    </citation>
    <scope>NUCLEOTIDE SEQUENCE [MRNA]</scope>
</reference>
<evidence type="ECO:0000250" key="1"/>
<evidence type="ECO:0000255" key="2"/>
<evidence type="ECO:0000255" key="3">
    <source>
        <dbReference type="PROSITE-ProRule" id="PRU00040"/>
    </source>
</evidence>
<evidence type="ECO:0000305" key="4"/>
<comment type="function">
    <text evidence="1">Interferes with one step of hemostasis (modulation of platelet aggregation, or coagulation cascade, for example).</text>
</comment>
<comment type="subunit">
    <text evidence="1">Heterodimer; disulfide-linked.</text>
</comment>
<comment type="subcellular location">
    <subcellularLocation>
        <location evidence="1">Secreted</location>
    </subcellularLocation>
</comment>
<comment type="tissue specificity">
    <text>Expressed by the venom gland.</text>
</comment>
<comment type="miscellaneous">
    <text>Shows greater sequence similarity to the beta than alpha subunits compared to other heterodimer snaclecs.</text>
</comment>
<comment type="similarity">
    <text evidence="4">Belongs to the snaclec family.</text>
</comment>
<dbReference type="EMBL" id="EU085463">
    <property type="protein sequence ID" value="ABW82673.1"/>
    <property type="molecule type" value="mRNA"/>
</dbReference>
<dbReference type="SMR" id="B4XT01"/>
<dbReference type="GO" id="GO:0005576">
    <property type="term" value="C:extracellular region"/>
    <property type="evidence" value="ECO:0007669"/>
    <property type="project" value="UniProtKB-SubCell"/>
</dbReference>
<dbReference type="GO" id="GO:0090729">
    <property type="term" value="F:toxin activity"/>
    <property type="evidence" value="ECO:0007669"/>
    <property type="project" value="UniProtKB-KW"/>
</dbReference>
<dbReference type="FunFam" id="3.10.100.10:FF:000087">
    <property type="entry name" value="Snaclec rhodocetin subunit delta"/>
    <property type="match status" value="1"/>
</dbReference>
<dbReference type="Gene3D" id="3.10.100.10">
    <property type="entry name" value="Mannose-Binding Protein A, subunit A"/>
    <property type="match status" value="1"/>
</dbReference>
<dbReference type="InterPro" id="IPR001304">
    <property type="entry name" value="C-type_lectin-like"/>
</dbReference>
<dbReference type="InterPro" id="IPR016186">
    <property type="entry name" value="C-type_lectin-like/link_sf"/>
</dbReference>
<dbReference type="InterPro" id="IPR050111">
    <property type="entry name" value="C-type_lectin/snaclec_domain"/>
</dbReference>
<dbReference type="InterPro" id="IPR018378">
    <property type="entry name" value="C-type_lectin_CS"/>
</dbReference>
<dbReference type="InterPro" id="IPR016187">
    <property type="entry name" value="CTDL_fold"/>
</dbReference>
<dbReference type="PANTHER" id="PTHR22803">
    <property type="entry name" value="MANNOSE, PHOSPHOLIPASE, LECTIN RECEPTOR RELATED"/>
    <property type="match status" value="1"/>
</dbReference>
<dbReference type="Pfam" id="PF00059">
    <property type="entry name" value="Lectin_C"/>
    <property type="match status" value="1"/>
</dbReference>
<dbReference type="PRINTS" id="PR01504">
    <property type="entry name" value="PNCREATITSAP"/>
</dbReference>
<dbReference type="SMART" id="SM00034">
    <property type="entry name" value="CLECT"/>
    <property type="match status" value="1"/>
</dbReference>
<dbReference type="SUPFAM" id="SSF56436">
    <property type="entry name" value="C-type lectin-like"/>
    <property type="match status" value="1"/>
</dbReference>
<dbReference type="PROSITE" id="PS00615">
    <property type="entry name" value="C_TYPE_LECTIN_1"/>
    <property type="match status" value="1"/>
</dbReference>
<dbReference type="PROSITE" id="PS50041">
    <property type="entry name" value="C_TYPE_LECTIN_2"/>
    <property type="match status" value="1"/>
</dbReference>
<keyword id="KW-1015">Disulfide bond</keyword>
<keyword id="KW-1199">Hemostasis impairing toxin</keyword>
<keyword id="KW-0964">Secreted</keyword>
<keyword id="KW-0732">Signal</keyword>
<keyword id="KW-0800">Toxin</keyword>